<protein>
    <recommendedName>
        <fullName evidence="11">Zinc metalloproteinase/disintegrin</fullName>
    </recommendedName>
    <alternativeName>
        <fullName evidence="9">Metalloproteinase PII</fullName>
        <shortName evidence="9">MPII</shortName>
    </alternativeName>
    <component>
        <recommendedName>
            <fullName evidence="11">Snake venom metalloproteinase</fullName>
            <shortName evidence="11">SVMP</shortName>
            <ecNumber evidence="4">3.4.24.-</ecNumber>
        </recommendedName>
    </component>
    <component>
        <recommendedName>
            <fullName evidence="10">Disintegrin Cdc</fullName>
        </recommendedName>
    </component>
</protein>
<evidence type="ECO:0000250" key="1">
    <source>
        <dbReference type="UniProtKB" id="O93523"/>
    </source>
</evidence>
<evidence type="ECO:0000250" key="2">
    <source>
        <dbReference type="UniProtKB" id="P34182"/>
    </source>
</evidence>
<evidence type="ECO:0000250" key="3">
    <source>
        <dbReference type="UniProtKB" id="Q90WC0"/>
    </source>
</evidence>
<evidence type="ECO:0000250" key="4">
    <source>
        <dbReference type="UniProtKB" id="Q98SP2"/>
    </source>
</evidence>
<evidence type="ECO:0000255" key="5"/>
<evidence type="ECO:0000255" key="6">
    <source>
        <dbReference type="PROSITE-ProRule" id="PRU00068"/>
    </source>
</evidence>
<evidence type="ECO:0000255" key="7">
    <source>
        <dbReference type="PROSITE-ProRule" id="PRU00276"/>
    </source>
</evidence>
<evidence type="ECO:0000269" key="8">
    <source>
    </source>
</evidence>
<evidence type="ECO:0000303" key="9">
    <source>
    </source>
</evidence>
<evidence type="ECO:0000303" key="10">
    <source>
    </source>
</evidence>
<evidence type="ECO:0000305" key="11"/>
<evidence type="ECO:0000305" key="12">
    <source>
    </source>
</evidence>
<evidence type="ECO:0000305" key="13">
    <source>
    </source>
</evidence>
<evidence type="ECO:0000312" key="14">
    <source>
        <dbReference type="EMBL" id="ACN38267.1"/>
    </source>
</evidence>
<comment type="function">
    <molecule>Snake venom metalloproteinase</molecule>
    <text evidence="2">Snake venom zinc metalloproteinase that causes hemorrhage by provoking the degradation of the sub-endothelial matrix proteins (fibronectin, laminin, type IV collagen, nidogen, and gelatins).</text>
</comment>
<comment type="function">
    <molecule>Disintegrin Cdc</molecule>
    <text evidence="8">Displays low cytotoxicity. In vitro, inhibits cancer cell migration (human breast cancer cell line MDA-MB-231) with a significant rate after 24 hours of incubation.</text>
</comment>
<comment type="cofactor">
    <cofactor evidence="1">
        <name>Zn(2+)</name>
        <dbReference type="ChEBI" id="CHEBI:29105"/>
    </cofactor>
    <text evidence="1">Binds 1 zinc ion per subunit.</text>
</comment>
<comment type="subcellular location">
    <molecule>Snake venom metalloproteinase</molecule>
    <subcellularLocation>
        <location evidence="12">Secreted</location>
    </subcellularLocation>
</comment>
<comment type="subcellular location">
    <molecule>Disintegrin Cdc</molecule>
    <subcellularLocation>
        <location evidence="8">Secreted</location>
    </subcellularLocation>
</comment>
<comment type="tissue specificity">
    <molecule>Snake venom metalloproteinase</molecule>
    <text evidence="12">Expressed by the venom gland.</text>
</comment>
<comment type="tissue specificity">
    <molecule>Disintegrin Cdc</molecule>
    <text evidence="13">Expressed by the venom gland.</text>
</comment>
<comment type="mass spectrometry">
    <molecule>Disintegrin Cdc</molecule>
</comment>
<comment type="miscellaneous">
    <text evidence="11">The disintegrin belongs to the medium disintegrin subfamily.</text>
</comment>
<comment type="similarity">
    <text evidence="11">Belongs to the venom metalloproteinase (M12B) family. P-II subfamily. P-IIa sub-subfamily.</text>
</comment>
<proteinExistence type="evidence at protein level"/>
<name>VM2C1_CRODO</name>
<reference evidence="14" key="1">
    <citation type="journal article" date="2009" name="Biochimie">
        <title>Crotalus durissus collilineatus venom gland transcriptome: analysis of gene expression profile.</title>
        <authorList>
            <person name="Boldrini-Franca J."/>
            <person name="Rodrigues R.S."/>
            <person name="Fonseca F.P."/>
            <person name="Menaldo D.L."/>
            <person name="Ferreira F.B."/>
            <person name="Henrique-Silva F."/>
            <person name="Soares A.M."/>
            <person name="Hamaguchi A."/>
            <person name="Rodrigues V.M."/>
            <person name="Otaviano A.R."/>
            <person name="Homsi-Brandeburgo M.I."/>
        </authorList>
    </citation>
    <scope>NUCLEOTIDE SEQUENCE [LARGE SCALE MRNA]</scope>
    <source>
        <tissue>Venom gland</tissue>
    </source>
</reference>
<reference key="2">
    <citation type="journal article" date="2018" name="J. Venom. Anim. Toxins Incl. Trop. Dis.">
        <title>Cell migration inhibition activity of a non-RGD disintegrin from Crotalus durissus collilineatus venom.</title>
        <authorList>
            <person name="Oliveira I.S."/>
            <person name="Manzini R.V."/>
            <person name="Ferreira I.G."/>
            <person name="Cardoso I.A."/>
            <person name="Bordon K.C.F."/>
            <person name="Machado A.R.T."/>
            <person name="Antunes L.M.G."/>
            <person name="Rosa J.C."/>
            <person name="Arantes E.C."/>
        </authorList>
    </citation>
    <scope>PROTEIN SEQUENCE OF 409-451</scope>
    <scope>IDENTIFICATION BY MASS SPECTROMETRY (DISINTEGRIN CDC)</scope>
    <scope>FUNCTION (DISINTEGRIN CDC)</scope>
    <scope>SUBCELLULAR LOCATION (DISINTEGRIN CDC)</scope>
    <scope>MASS SPECTROMETRY</scope>
    <source>
        <tissue>Venom</tissue>
    </source>
</reference>
<sequence>MIQVLLVTICLAAFPYQGSSIILESGNVNDYEVIYPRKVTALPKGAVQPKYEDTMQYELKVNGQPVVLHLEKNKGLFSKDYSETHYSPDGRKITTNPSVEDHCYYHGRIENDADSTASISACNGLKGHFKLQGEMYIIEPLELSDSEDHAVFKLENVEKEDEAPKMCGVTQNWESNEPIKKASHLNLNPEHQRYVEIVIVVDHGMFTKYNGDSDKIRQRVHQMVNIMKESYRYMYIDISLAGIEIWSNKDLINVQPAAPNTLKSFGEWRETDLPKRKSHDNAQLLTSIDFNGQTIGIANIGAICDPKPSTRVVQDHSKINLRVALTMTHELSHNLGIHHDTGSCSCSGYSCIMSPVISDEPSKYFSDCSYIQCWNFIMNQKPQCILKKPLRTDTVSTPVSGNELLEARIECDCGSIENPCCYATTCKLRPGSQCAEGMCCDQCRFMKKGTVCRVSLVNKNDDTCTGQSADCPRNVLYG</sequence>
<organism>
    <name type="scientific">Crotalus durissus collilineatus</name>
    <name type="common">Brazilian rattlesnake</name>
    <dbReference type="NCBI Taxonomy" id="221569"/>
    <lineage>
        <taxon>Eukaryota</taxon>
        <taxon>Metazoa</taxon>
        <taxon>Chordata</taxon>
        <taxon>Craniata</taxon>
        <taxon>Vertebrata</taxon>
        <taxon>Euteleostomi</taxon>
        <taxon>Lepidosauria</taxon>
        <taxon>Squamata</taxon>
        <taxon>Bifurcata</taxon>
        <taxon>Unidentata</taxon>
        <taxon>Episquamata</taxon>
        <taxon>Toxicofera</taxon>
        <taxon>Serpentes</taxon>
        <taxon>Colubroidea</taxon>
        <taxon>Viperidae</taxon>
        <taxon>Crotalinae</taxon>
        <taxon>Crotalus</taxon>
    </lineage>
</organism>
<feature type="signal peptide" evidence="5">
    <location>
        <begin position="1"/>
        <end position="20"/>
    </location>
</feature>
<feature type="propeptide" id="PRO_0000453668" evidence="4">
    <location>
        <begin position="21"/>
        <end position="187"/>
    </location>
</feature>
<feature type="chain" id="PRO_0000453669" description="Snake venom metalloproteinase">
    <location>
        <begin position="188"/>
        <end position="389"/>
    </location>
</feature>
<feature type="propeptide" id="PRO_0000453670" evidence="8">
    <location>
        <begin position="390"/>
        <end position="408"/>
    </location>
</feature>
<feature type="chain" id="PRO_0000453671" description="Disintegrin Cdc" evidence="8">
    <location>
        <begin position="409"/>
        <end position="473"/>
    </location>
</feature>
<feature type="propeptide" id="PRO_0000453672" evidence="8">
    <location>
        <begin position="474"/>
        <end position="478"/>
    </location>
</feature>
<feature type="domain" description="Peptidase M12B" evidence="7">
    <location>
        <begin position="193"/>
        <end position="389"/>
    </location>
</feature>
<feature type="domain" description="Disintegrin" evidence="6">
    <location>
        <begin position="397"/>
        <end position="478"/>
    </location>
</feature>
<feature type="active site" evidence="7">
    <location>
        <position position="330"/>
    </location>
</feature>
<feature type="binding site" evidence="7">
    <location>
        <position position="329"/>
    </location>
    <ligand>
        <name>Zn(2+)</name>
        <dbReference type="ChEBI" id="CHEBI:29105"/>
        <note>catalytic</note>
    </ligand>
</feature>
<feature type="binding site" evidence="7">
    <location>
        <position position="333"/>
    </location>
    <ligand>
        <name>Zn(2+)</name>
        <dbReference type="ChEBI" id="CHEBI:29105"/>
        <note>catalytic</note>
    </ligand>
</feature>
<feature type="binding site" evidence="7">
    <location>
        <position position="339"/>
    </location>
    <ligand>
        <name>Zn(2+)</name>
        <dbReference type="ChEBI" id="CHEBI:29105"/>
        <note>catalytic</note>
    </ligand>
</feature>
<feature type="disulfide bond" evidence="7">
    <location>
        <begin position="304"/>
        <end position="384"/>
    </location>
</feature>
<feature type="disulfide bond" evidence="7">
    <location>
        <begin position="344"/>
        <end position="368"/>
    </location>
</feature>
<feature type="disulfide bond" evidence="7">
    <location>
        <begin position="346"/>
        <end position="351"/>
    </location>
</feature>
<feature type="disulfide bond" evidence="3">
    <location>
        <begin position="411"/>
        <end position="420"/>
    </location>
</feature>
<feature type="disulfide bond" evidence="3">
    <location>
        <begin position="413"/>
        <end position="421"/>
    </location>
</feature>
<feature type="disulfide bond" evidence="3">
    <location>
        <begin position="426"/>
        <end position="440"/>
    </location>
</feature>
<feature type="disulfide bond" evidence="3">
    <location>
        <begin position="434"/>
        <end position="464"/>
    </location>
</feature>
<feature type="disulfide bond" evidence="3">
    <location>
        <begin position="439"/>
        <end position="443"/>
    </location>
</feature>
<feature type="disulfide bond" evidence="3 6">
    <location>
        <begin position="452"/>
        <end position="471"/>
    </location>
</feature>
<accession>C0L2T8</accession>
<gene>
    <name type="primary">MPII</name>
</gene>
<keyword id="KW-1217">Cell adhesion impairing toxin</keyword>
<keyword id="KW-0177">Collagen degradation</keyword>
<keyword id="KW-0903">Direct protein sequencing</keyword>
<keyword id="KW-1015">Disulfide bond</keyword>
<keyword id="KW-1200">Hemorrhagic toxin</keyword>
<keyword id="KW-1199">Hemostasis impairing toxin</keyword>
<keyword id="KW-0378">Hydrolase</keyword>
<keyword id="KW-0479">Metal-binding</keyword>
<keyword id="KW-0482">Metalloprotease</keyword>
<keyword id="KW-0645">Protease</keyword>
<keyword id="KW-0964">Secreted</keyword>
<keyword id="KW-0732">Signal</keyword>
<keyword id="KW-0800">Toxin</keyword>
<keyword id="KW-0862">Zinc</keyword>
<keyword id="KW-0865">Zymogen</keyword>
<dbReference type="EC" id="3.4.24.-" evidence="4"/>
<dbReference type="EMBL" id="FJ654661">
    <property type="protein sequence ID" value="ACN38267.1"/>
    <property type="molecule type" value="mRNA"/>
</dbReference>
<dbReference type="SMR" id="C0L2T8"/>
<dbReference type="MEROPS" id="M12.145"/>
<dbReference type="GO" id="GO:0005576">
    <property type="term" value="C:extracellular region"/>
    <property type="evidence" value="ECO:0007669"/>
    <property type="project" value="UniProtKB-SubCell"/>
</dbReference>
<dbReference type="GO" id="GO:0005886">
    <property type="term" value="C:plasma membrane"/>
    <property type="evidence" value="ECO:0007669"/>
    <property type="project" value="TreeGrafter"/>
</dbReference>
<dbReference type="GO" id="GO:0046872">
    <property type="term" value="F:metal ion binding"/>
    <property type="evidence" value="ECO:0007669"/>
    <property type="project" value="UniProtKB-KW"/>
</dbReference>
<dbReference type="GO" id="GO:0004222">
    <property type="term" value="F:metalloendopeptidase activity"/>
    <property type="evidence" value="ECO:0007669"/>
    <property type="project" value="InterPro"/>
</dbReference>
<dbReference type="GO" id="GO:0090729">
    <property type="term" value="F:toxin activity"/>
    <property type="evidence" value="ECO:0007669"/>
    <property type="project" value="UniProtKB-KW"/>
</dbReference>
<dbReference type="GO" id="GO:0030574">
    <property type="term" value="P:collagen catabolic process"/>
    <property type="evidence" value="ECO:0007669"/>
    <property type="project" value="UniProtKB-KW"/>
</dbReference>
<dbReference type="GO" id="GO:0006508">
    <property type="term" value="P:proteolysis"/>
    <property type="evidence" value="ECO:0007669"/>
    <property type="project" value="UniProtKB-KW"/>
</dbReference>
<dbReference type="CDD" id="cd04269">
    <property type="entry name" value="ZnMc_adamalysin_II_like"/>
    <property type="match status" value="1"/>
</dbReference>
<dbReference type="FunFam" id="3.40.390.10:FF:000002">
    <property type="entry name" value="Disintegrin and metalloproteinase domain-containing protein 22"/>
    <property type="match status" value="1"/>
</dbReference>
<dbReference type="Gene3D" id="3.40.390.10">
    <property type="entry name" value="Collagenase (Catalytic Domain)"/>
    <property type="match status" value="1"/>
</dbReference>
<dbReference type="Gene3D" id="4.10.70.10">
    <property type="entry name" value="Disintegrin domain"/>
    <property type="match status" value="1"/>
</dbReference>
<dbReference type="InterPro" id="IPR018358">
    <property type="entry name" value="Disintegrin_CS"/>
</dbReference>
<dbReference type="InterPro" id="IPR001762">
    <property type="entry name" value="Disintegrin_dom"/>
</dbReference>
<dbReference type="InterPro" id="IPR036436">
    <property type="entry name" value="Disintegrin_dom_sf"/>
</dbReference>
<dbReference type="InterPro" id="IPR024079">
    <property type="entry name" value="MetalloPept_cat_dom_sf"/>
</dbReference>
<dbReference type="InterPro" id="IPR001590">
    <property type="entry name" value="Peptidase_M12B"/>
</dbReference>
<dbReference type="InterPro" id="IPR002870">
    <property type="entry name" value="Peptidase_M12B_N"/>
</dbReference>
<dbReference type="InterPro" id="IPR034027">
    <property type="entry name" value="Reprolysin_adamalysin"/>
</dbReference>
<dbReference type="PANTHER" id="PTHR11905">
    <property type="entry name" value="ADAM A DISINTEGRIN AND METALLOPROTEASE DOMAIN"/>
    <property type="match status" value="1"/>
</dbReference>
<dbReference type="PANTHER" id="PTHR11905:SF32">
    <property type="entry name" value="DISINTEGRIN AND METALLOPROTEINASE DOMAIN-CONTAINING PROTEIN 28"/>
    <property type="match status" value="1"/>
</dbReference>
<dbReference type="Pfam" id="PF00200">
    <property type="entry name" value="Disintegrin"/>
    <property type="match status" value="1"/>
</dbReference>
<dbReference type="Pfam" id="PF01562">
    <property type="entry name" value="Pep_M12B_propep"/>
    <property type="match status" value="1"/>
</dbReference>
<dbReference type="Pfam" id="PF01421">
    <property type="entry name" value="Reprolysin"/>
    <property type="match status" value="1"/>
</dbReference>
<dbReference type="PRINTS" id="PR00289">
    <property type="entry name" value="DISINTEGRIN"/>
</dbReference>
<dbReference type="SMART" id="SM00050">
    <property type="entry name" value="DISIN"/>
    <property type="match status" value="1"/>
</dbReference>
<dbReference type="SUPFAM" id="SSF57552">
    <property type="entry name" value="Blood coagulation inhibitor (disintegrin)"/>
    <property type="match status" value="1"/>
</dbReference>
<dbReference type="SUPFAM" id="SSF55486">
    <property type="entry name" value="Metalloproteases ('zincins'), catalytic domain"/>
    <property type="match status" value="1"/>
</dbReference>
<dbReference type="PROSITE" id="PS50215">
    <property type="entry name" value="ADAM_MEPRO"/>
    <property type="match status" value="1"/>
</dbReference>
<dbReference type="PROSITE" id="PS00427">
    <property type="entry name" value="DISINTEGRIN_1"/>
    <property type="match status" value="1"/>
</dbReference>
<dbReference type="PROSITE" id="PS50214">
    <property type="entry name" value="DISINTEGRIN_2"/>
    <property type="match status" value="1"/>
</dbReference>
<dbReference type="PROSITE" id="PS00142">
    <property type="entry name" value="ZINC_PROTEASE"/>
    <property type="match status" value="1"/>
</dbReference>